<gene>
    <name evidence="1" type="primary">rpmH</name>
    <name type="ordered locus">CLB_3741</name>
</gene>
<feature type="chain" id="PRO_1000013318" description="Large ribosomal subunit protein bL34">
    <location>
        <begin position="1"/>
        <end position="44"/>
    </location>
</feature>
<feature type="region of interest" description="Disordered" evidence="2">
    <location>
        <begin position="1"/>
        <end position="44"/>
    </location>
</feature>
<feature type="compositionally biased region" description="Basic residues" evidence="2">
    <location>
        <begin position="7"/>
        <end position="23"/>
    </location>
</feature>
<feature type="compositionally biased region" description="Basic residues" evidence="2">
    <location>
        <begin position="30"/>
        <end position="44"/>
    </location>
</feature>
<reference key="1">
    <citation type="journal article" date="2007" name="PLoS ONE">
        <title>Analysis of the neurotoxin complex genes in Clostridium botulinum A1-A4 and B1 strains: BoNT/A3, /Ba4 and /B1 clusters are located within plasmids.</title>
        <authorList>
            <person name="Smith T.J."/>
            <person name="Hill K.K."/>
            <person name="Foley B.T."/>
            <person name="Detter J.C."/>
            <person name="Munk A.C."/>
            <person name="Bruce D.C."/>
            <person name="Doggett N.A."/>
            <person name="Smith L.A."/>
            <person name="Marks J.D."/>
            <person name="Xie G."/>
            <person name="Brettin T.S."/>
        </authorList>
    </citation>
    <scope>NUCLEOTIDE SEQUENCE [LARGE SCALE GENOMIC DNA]</scope>
    <source>
        <strain>ATCC 19397 / Type A</strain>
    </source>
</reference>
<name>RL34_CLOB1</name>
<keyword id="KW-0687">Ribonucleoprotein</keyword>
<keyword id="KW-0689">Ribosomal protein</keyword>
<dbReference type="EMBL" id="CP000726">
    <property type="protein sequence ID" value="ABS33381.1"/>
    <property type="molecule type" value="Genomic_DNA"/>
</dbReference>
<dbReference type="RefSeq" id="WP_003359452.1">
    <property type="nucleotide sequence ID" value="NC_009697.1"/>
</dbReference>
<dbReference type="SMR" id="A7FPL6"/>
<dbReference type="GeneID" id="92940449"/>
<dbReference type="KEGG" id="cba:CLB_3741"/>
<dbReference type="HOGENOM" id="CLU_129938_2_0_9"/>
<dbReference type="GO" id="GO:1990904">
    <property type="term" value="C:ribonucleoprotein complex"/>
    <property type="evidence" value="ECO:0007669"/>
    <property type="project" value="UniProtKB-KW"/>
</dbReference>
<dbReference type="GO" id="GO:0005840">
    <property type="term" value="C:ribosome"/>
    <property type="evidence" value="ECO:0007669"/>
    <property type="project" value="UniProtKB-KW"/>
</dbReference>
<dbReference type="GO" id="GO:0003735">
    <property type="term" value="F:structural constituent of ribosome"/>
    <property type="evidence" value="ECO:0007669"/>
    <property type="project" value="InterPro"/>
</dbReference>
<dbReference type="GO" id="GO:0006412">
    <property type="term" value="P:translation"/>
    <property type="evidence" value="ECO:0007669"/>
    <property type="project" value="UniProtKB-UniRule"/>
</dbReference>
<dbReference type="FunFam" id="1.10.287.3980:FF:000001">
    <property type="entry name" value="Mitochondrial ribosomal protein L34"/>
    <property type="match status" value="1"/>
</dbReference>
<dbReference type="Gene3D" id="1.10.287.3980">
    <property type="match status" value="1"/>
</dbReference>
<dbReference type="HAMAP" id="MF_00391">
    <property type="entry name" value="Ribosomal_bL34"/>
    <property type="match status" value="1"/>
</dbReference>
<dbReference type="InterPro" id="IPR000271">
    <property type="entry name" value="Ribosomal_bL34"/>
</dbReference>
<dbReference type="InterPro" id="IPR020939">
    <property type="entry name" value="Ribosomal_bL34_CS"/>
</dbReference>
<dbReference type="NCBIfam" id="TIGR01030">
    <property type="entry name" value="rpmH_bact"/>
    <property type="match status" value="1"/>
</dbReference>
<dbReference type="PANTHER" id="PTHR14503:SF4">
    <property type="entry name" value="LARGE RIBOSOMAL SUBUNIT PROTEIN BL34M"/>
    <property type="match status" value="1"/>
</dbReference>
<dbReference type="PANTHER" id="PTHR14503">
    <property type="entry name" value="MITOCHONDRIAL RIBOSOMAL PROTEIN 34 FAMILY MEMBER"/>
    <property type="match status" value="1"/>
</dbReference>
<dbReference type="Pfam" id="PF00468">
    <property type="entry name" value="Ribosomal_L34"/>
    <property type="match status" value="1"/>
</dbReference>
<dbReference type="PROSITE" id="PS00784">
    <property type="entry name" value="RIBOSOMAL_L34"/>
    <property type="match status" value="1"/>
</dbReference>
<evidence type="ECO:0000255" key="1">
    <source>
        <dbReference type="HAMAP-Rule" id="MF_00391"/>
    </source>
</evidence>
<evidence type="ECO:0000256" key="2">
    <source>
        <dbReference type="SAM" id="MobiDB-lite"/>
    </source>
</evidence>
<evidence type="ECO:0000305" key="3"/>
<comment type="similarity">
    <text evidence="1">Belongs to the bacterial ribosomal protein bL34 family.</text>
</comment>
<accession>A7FPL6</accession>
<proteinExistence type="inferred from homology"/>
<sequence>MFMTYQPKKRQRKKEHGFRKRMKTSSGRNILRKRRQKGRKRLTA</sequence>
<organism>
    <name type="scientific">Clostridium botulinum (strain ATCC 19397 / Type A)</name>
    <dbReference type="NCBI Taxonomy" id="441770"/>
    <lineage>
        <taxon>Bacteria</taxon>
        <taxon>Bacillati</taxon>
        <taxon>Bacillota</taxon>
        <taxon>Clostridia</taxon>
        <taxon>Eubacteriales</taxon>
        <taxon>Clostridiaceae</taxon>
        <taxon>Clostridium</taxon>
    </lineage>
</organism>
<protein>
    <recommendedName>
        <fullName evidence="1">Large ribosomal subunit protein bL34</fullName>
    </recommendedName>
    <alternativeName>
        <fullName evidence="3">50S ribosomal protein L34</fullName>
    </alternativeName>
</protein>